<name>MUKF_SALPK</name>
<accession>B5BBN6</accession>
<dbReference type="EMBL" id="FM200053">
    <property type="protein sequence ID" value="CAR59871.1"/>
    <property type="molecule type" value="Genomic_DNA"/>
</dbReference>
<dbReference type="RefSeq" id="WP_001288828.1">
    <property type="nucleotide sequence ID" value="NC_011147.1"/>
</dbReference>
<dbReference type="SMR" id="B5BBN6"/>
<dbReference type="KEGG" id="sek:SSPA1679"/>
<dbReference type="HOGENOM" id="CLU_049853_0_0_6"/>
<dbReference type="Proteomes" id="UP000001869">
    <property type="component" value="Chromosome"/>
</dbReference>
<dbReference type="GO" id="GO:0005737">
    <property type="term" value="C:cytoplasm"/>
    <property type="evidence" value="ECO:0007669"/>
    <property type="project" value="UniProtKB-UniRule"/>
</dbReference>
<dbReference type="GO" id="GO:0009295">
    <property type="term" value="C:nucleoid"/>
    <property type="evidence" value="ECO:0007669"/>
    <property type="project" value="UniProtKB-SubCell"/>
</dbReference>
<dbReference type="GO" id="GO:0005509">
    <property type="term" value="F:calcium ion binding"/>
    <property type="evidence" value="ECO:0007669"/>
    <property type="project" value="UniProtKB-UniRule"/>
</dbReference>
<dbReference type="GO" id="GO:0051301">
    <property type="term" value="P:cell division"/>
    <property type="evidence" value="ECO:0007669"/>
    <property type="project" value="UniProtKB-KW"/>
</dbReference>
<dbReference type="GO" id="GO:0030261">
    <property type="term" value="P:chromosome condensation"/>
    <property type="evidence" value="ECO:0007669"/>
    <property type="project" value="UniProtKB-KW"/>
</dbReference>
<dbReference type="GO" id="GO:0007059">
    <property type="term" value="P:chromosome segregation"/>
    <property type="evidence" value="ECO:0007669"/>
    <property type="project" value="UniProtKB-UniRule"/>
</dbReference>
<dbReference type="GO" id="GO:0006260">
    <property type="term" value="P:DNA replication"/>
    <property type="evidence" value="ECO:0007669"/>
    <property type="project" value="UniProtKB-UniRule"/>
</dbReference>
<dbReference type="CDD" id="cd16337">
    <property type="entry name" value="MukF_C"/>
    <property type="match status" value="1"/>
</dbReference>
<dbReference type="CDD" id="cd16335">
    <property type="entry name" value="MukF_N"/>
    <property type="match status" value="1"/>
</dbReference>
<dbReference type="Gene3D" id="1.20.58.590">
    <property type="entry name" value="Chromosome partition protein MukF, middle domain"/>
    <property type="match status" value="1"/>
</dbReference>
<dbReference type="Gene3D" id="1.10.225.40">
    <property type="entry name" value="MukF, C-terminal domain"/>
    <property type="match status" value="1"/>
</dbReference>
<dbReference type="Gene3D" id="1.10.10.10">
    <property type="entry name" value="Winged helix-like DNA-binding domain superfamily/Winged helix DNA-binding domain"/>
    <property type="match status" value="1"/>
</dbReference>
<dbReference type="HAMAP" id="MF_01803">
    <property type="entry name" value="MukF"/>
    <property type="match status" value="1"/>
</dbReference>
<dbReference type="InterPro" id="IPR005582">
    <property type="entry name" value="Chromosome_partition_MukF"/>
</dbReference>
<dbReference type="InterPro" id="IPR033441">
    <property type="entry name" value="MukF_C"/>
</dbReference>
<dbReference type="InterPro" id="IPR038198">
    <property type="entry name" value="MukF_C_sf"/>
</dbReference>
<dbReference type="InterPro" id="IPR033440">
    <property type="entry name" value="MukF_M"/>
</dbReference>
<dbReference type="InterPro" id="IPR036141">
    <property type="entry name" value="MukF_M_sp"/>
</dbReference>
<dbReference type="InterPro" id="IPR033439">
    <property type="entry name" value="MukF_WHTH"/>
</dbReference>
<dbReference type="InterPro" id="IPR036388">
    <property type="entry name" value="WH-like_DNA-bd_sf"/>
</dbReference>
<dbReference type="InterPro" id="IPR036390">
    <property type="entry name" value="WH_DNA-bd_sf"/>
</dbReference>
<dbReference type="NCBIfam" id="NF003615">
    <property type="entry name" value="PRK05260.1"/>
    <property type="match status" value="1"/>
</dbReference>
<dbReference type="Pfam" id="PF03882">
    <property type="entry name" value="KicB"/>
    <property type="match status" value="1"/>
</dbReference>
<dbReference type="Pfam" id="PF17193">
    <property type="entry name" value="MukF_C"/>
    <property type="match status" value="1"/>
</dbReference>
<dbReference type="Pfam" id="PF17192">
    <property type="entry name" value="MukF_M"/>
    <property type="match status" value="1"/>
</dbReference>
<dbReference type="PIRSF" id="PIRSF018282">
    <property type="entry name" value="MukF"/>
    <property type="match status" value="1"/>
</dbReference>
<dbReference type="SUPFAM" id="SSF140570">
    <property type="entry name" value="MukF C-terminal domain-like"/>
    <property type="match status" value="1"/>
</dbReference>
<dbReference type="SUPFAM" id="SSF46785">
    <property type="entry name" value="Winged helix' DNA-binding domain"/>
    <property type="match status" value="1"/>
</dbReference>
<protein>
    <recommendedName>
        <fullName evidence="1">Chromosome partition protein MukF</fullName>
    </recommendedName>
</protein>
<feature type="chain" id="PRO_1000187519" description="Chromosome partition protein MukF">
    <location>
        <begin position="1"/>
        <end position="440"/>
    </location>
</feature>
<feature type="region of interest" description="Leucine-zipper">
    <location>
        <begin position="208"/>
        <end position="236"/>
    </location>
</feature>
<reference key="1">
    <citation type="journal article" date="2009" name="BMC Genomics">
        <title>Pseudogene accumulation in the evolutionary histories of Salmonella enterica serovars Paratyphi A and Typhi.</title>
        <authorList>
            <person name="Holt K.E."/>
            <person name="Thomson N.R."/>
            <person name="Wain J."/>
            <person name="Langridge G.C."/>
            <person name="Hasan R."/>
            <person name="Bhutta Z.A."/>
            <person name="Quail M.A."/>
            <person name="Norbertczak H."/>
            <person name="Walker D."/>
            <person name="Simmonds M."/>
            <person name="White B."/>
            <person name="Bason N."/>
            <person name="Mungall K."/>
            <person name="Dougan G."/>
            <person name="Parkhill J."/>
        </authorList>
    </citation>
    <scope>NUCLEOTIDE SEQUENCE [LARGE SCALE GENOMIC DNA]</scope>
    <source>
        <strain>AKU_12601</strain>
    </source>
</reference>
<evidence type="ECO:0000255" key="1">
    <source>
        <dbReference type="HAMAP-Rule" id="MF_01803"/>
    </source>
</evidence>
<gene>
    <name evidence="1" type="primary">mukF</name>
    <name type="ordered locus">SSPA1679</name>
</gene>
<organism>
    <name type="scientific">Salmonella paratyphi A (strain AKU_12601)</name>
    <dbReference type="NCBI Taxonomy" id="554290"/>
    <lineage>
        <taxon>Bacteria</taxon>
        <taxon>Pseudomonadati</taxon>
        <taxon>Pseudomonadota</taxon>
        <taxon>Gammaproteobacteria</taxon>
        <taxon>Enterobacterales</taxon>
        <taxon>Enterobacteriaceae</taxon>
        <taxon>Salmonella</taxon>
    </lineage>
</organism>
<keyword id="KW-0106">Calcium</keyword>
<keyword id="KW-0131">Cell cycle</keyword>
<keyword id="KW-0132">Cell division</keyword>
<keyword id="KW-0159">Chromosome partition</keyword>
<keyword id="KW-0963">Cytoplasm</keyword>
<keyword id="KW-0226">DNA condensation</keyword>
<comment type="function">
    <text evidence="1">Involved in chromosome condensation, segregation and cell cycle progression. May participate in facilitating chromosome segregation by condensation DNA from both sides of a centrally located replisome during cell division. Not required for mini-F plasmid partitioning. Probably acts via its interaction with MukB and MukE. Overexpression results in anucleate cells. It has a calcium binding activity.</text>
</comment>
<comment type="subunit">
    <text evidence="1">Interacts, and probably forms a ternary complex, with MukE and MukB via its C-terminal region. The complex formation is stimulated by calcium or magnesium. It is required for an interaction between MukE and MukB.</text>
</comment>
<comment type="subcellular location">
    <subcellularLocation>
        <location evidence="1">Cytoplasm</location>
        <location evidence="1">Nucleoid</location>
    </subcellularLocation>
    <text evidence="1">Restricted to the nucleoid region.</text>
</comment>
<comment type="similarity">
    <text evidence="1">Belongs to the MukF family.</text>
</comment>
<sequence>MSEFSQTVPELVAWARKNDFSISLPVDRLSFLLAVATLNGERLDGEMSEGELVDAFRHVSDAFEQTSETIGVRANNAINDMVRQRLLNRFTSEQAEGNAIYRLTPLGIGITDYYIRQREFSTLRLSMQLSIVAGELKRAADAAAEGGDEFHWHRNVYAPLKYSVAEIFDSIDLTQRIMDEQQQQVKDDIAQLLNKDWRAAISSCELLLSETSGTLRELQDTLEAAGDKLQANLLRIQDATMTHDDLHFVDRLVFDLQSKLDRIISWGQQSIDLWIGYDRHVHKFIRTAIDMDKNRVFAQRLRQSVQTYFDDPWALTYANADRLLDMRDEEMALRDDEVTGELPPDLEYEEFNEIREQLAAIIEEQLAIYKTRQTPLDLGLVVREYLAQYPRARHFDVARIVIDQAVRLGVAQADFTGLPAKWQPINDYGAKVQAHVIDKY</sequence>
<proteinExistence type="inferred from homology"/>